<keyword id="KW-0067">ATP-binding</keyword>
<keyword id="KW-0276">Fatty acid metabolism</keyword>
<keyword id="KW-0436">Ligase</keyword>
<keyword id="KW-0443">Lipid metabolism</keyword>
<keyword id="KW-0521">NADP</keyword>
<keyword id="KW-0547">Nucleotide-binding</keyword>
<keyword id="KW-0560">Oxidoreductase</keyword>
<keyword id="KW-0596">Phosphopantetheine</keyword>
<keyword id="KW-0597">Phosphoprotein</keyword>
<keyword id="KW-1185">Reference proteome</keyword>
<evidence type="ECO:0000250" key="1">
    <source>
        <dbReference type="UniProtKB" id="B2HN69"/>
    </source>
</evidence>
<evidence type="ECO:0000250" key="2">
    <source>
        <dbReference type="UniProtKB" id="Q6RKB1"/>
    </source>
</evidence>
<evidence type="ECO:0000255" key="3">
    <source>
        <dbReference type="HAMAP-Rule" id="MF_02247"/>
    </source>
</evidence>
<evidence type="ECO:0000269" key="4">
    <source>
    </source>
</evidence>
<evidence type="ECO:0000303" key="5">
    <source>
    </source>
</evidence>
<evidence type="ECO:0000305" key="6"/>
<evidence type="ECO:0000312" key="7">
    <source>
        <dbReference type="EMBL" id="CCP45386.1"/>
    </source>
</evidence>
<feature type="chain" id="PRO_0000451306" description="Carboxylic acid reductase">
    <location>
        <begin position="1"/>
        <end position="1168"/>
    </location>
</feature>
<feature type="domain" description="Carrier" evidence="3">
    <location>
        <begin position="645"/>
        <end position="720"/>
    </location>
</feature>
<feature type="binding site" evidence="3">
    <location>
        <position position="290"/>
    </location>
    <ligand>
        <name>AMP</name>
        <dbReference type="ChEBI" id="CHEBI:456215"/>
    </ligand>
</feature>
<feature type="binding site" evidence="3">
    <location>
        <position position="385"/>
    </location>
    <ligand>
        <name>AMP</name>
        <dbReference type="ChEBI" id="CHEBI:456215"/>
    </ligand>
</feature>
<feature type="binding site" evidence="3">
    <location>
        <begin position="407"/>
        <end position="408"/>
    </location>
    <ligand>
        <name>AMP</name>
        <dbReference type="ChEBI" id="CHEBI:456215"/>
    </ligand>
</feature>
<feature type="binding site" evidence="3">
    <location>
        <position position="412"/>
    </location>
    <ligand>
        <name>AMP</name>
        <dbReference type="ChEBI" id="CHEBI:456215"/>
    </ligand>
</feature>
<feature type="binding site" evidence="3">
    <location>
        <position position="485"/>
    </location>
    <ligand>
        <name>AMP</name>
        <dbReference type="ChEBI" id="CHEBI:456215"/>
    </ligand>
</feature>
<feature type="binding site" evidence="3">
    <location>
        <begin position="497"/>
        <end position="500"/>
    </location>
    <ligand>
        <name>AMP</name>
        <dbReference type="ChEBI" id="CHEBI:456215"/>
    </ligand>
</feature>
<feature type="binding site" evidence="3">
    <location>
        <position position="506"/>
    </location>
    <ligand>
        <name>AMP</name>
        <dbReference type="ChEBI" id="CHEBI:456215"/>
    </ligand>
</feature>
<feature type="binding site" evidence="3">
    <location>
        <position position="606"/>
    </location>
    <ligand>
        <name>AMP</name>
        <dbReference type="ChEBI" id="CHEBI:456215"/>
    </ligand>
</feature>
<feature type="binding site" evidence="3">
    <location>
        <begin position="777"/>
        <end position="780"/>
    </location>
    <ligand>
        <name>NADP(+)</name>
        <dbReference type="ChEBI" id="CHEBI:58349"/>
    </ligand>
</feature>
<feature type="binding site" evidence="3">
    <location>
        <position position="804"/>
    </location>
    <ligand>
        <name>NADP(+)</name>
        <dbReference type="ChEBI" id="CHEBI:58349"/>
    </ligand>
</feature>
<feature type="binding site" evidence="3">
    <location>
        <position position="814"/>
    </location>
    <ligand>
        <name>NADP(+)</name>
        <dbReference type="ChEBI" id="CHEBI:58349"/>
    </ligand>
</feature>
<feature type="binding site" evidence="3">
    <location>
        <begin position="844"/>
        <end position="845"/>
    </location>
    <ligand>
        <name>NADP(+)</name>
        <dbReference type="ChEBI" id="CHEBI:58349"/>
    </ligand>
</feature>
<feature type="binding site" evidence="3">
    <location>
        <begin position="870"/>
        <end position="872"/>
    </location>
    <ligand>
        <name>NADP(+)</name>
        <dbReference type="ChEBI" id="CHEBI:58349"/>
    </ligand>
</feature>
<feature type="binding site" evidence="3">
    <location>
        <position position="910"/>
    </location>
    <ligand>
        <name>NADP(+)</name>
        <dbReference type="ChEBI" id="CHEBI:58349"/>
    </ligand>
</feature>
<feature type="binding site" evidence="3">
    <location>
        <position position="946"/>
    </location>
    <ligand>
        <name>NADP(+)</name>
        <dbReference type="ChEBI" id="CHEBI:58349"/>
    </ligand>
</feature>
<feature type="binding site" evidence="3">
    <location>
        <position position="950"/>
    </location>
    <ligand>
        <name>NADP(+)</name>
        <dbReference type="ChEBI" id="CHEBI:58349"/>
    </ligand>
</feature>
<feature type="modified residue" description="O-(pantetheine 4'-phosphoryl)serine" evidence="3">
    <location>
        <position position="679"/>
    </location>
</feature>
<protein>
    <recommendedName>
        <fullName evidence="1 3">Carboxylic acid reductase</fullName>
        <shortName evidence="1 3">CAR</shortName>
        <ecNumber evidence="1 3">1.2.1.-</ecNumber>
    </recommendedName>
    <alternativeName>
        <fullName evidence="1 3">ATP/NADPH-dependent carboxylic acid reductase</fullName>
    </alternativeName>
    <alternativeName>
        <fullName evidence="5">FAAL9</fullName>
    </alternativeName>
    <alternativeName>
        <fullName evidence="6">Medium/long-chain-fatty-acid--AMP ligase FadD9</fullName>
        <ecNumber evidence="4">6.2.1.-</ecNumber>
    </alternativeName>
</protein>
<organism>
    <name type="scientific">Mycobacterium tuberculosis (strain ATCC 25618 / H37Rv)</name>
    <dbReference type="NCBI Taxonomy" id="83332"/>
    <lineage>
        <taxon>Bacteria</taxon>
        <taxon>Bacillati</taxon>
        <taxon>Actinomycetota</taxon>
        <taxon>Actinomycetes</taxon>
        <taxon>Mycobacteriales</taxon>
        <taxon>Mycobacteriaceae</taxon>
        <taxon>Mycobacterium</taxon>
        <taxon>Mycobacterium tuberculosis complex</taxon>
    </lineage>
</organism>
<proteinExistence type="evidence at protein level"/>
<name>CAR_MYCTU</name>
<comment type="function">
    <text evidence="1 4">Catalyzes the ATP- and NADPH-dependent reduction of carboxylic acids to the corresponding aldehydes (By similarity). In vitro, also catalyzes the activation of medium/long-chain fatty acids as acyl-adenylates (acyl-AMP) (PubMed:19182784).</text>
</comment>
<comment type="catalytic activity">
    <reaction evidence="1 3">
        <text>a carboxylate + ATP + NADPH + H(+) = an aldehyde + AMP + diphosphate + NADP(+)</text>
        <dbReference type="Rhea" id="RHEA:50916"/>
        <dbReference type="ChEBI" id="CHEBI:15378"/>
        <dbReference type="ChEBI" id="CHEBI:17478"/>
        <dbReference type="ChEBI" id="CHEBI:29067"/>
        <dbReference type="ChEBI" id="CHEBI:30616"/>
        <dbReference type="ChEBI" id="CHEBI:33019"/>
        <dbReference type="ChEBI" id="CHEBI:57783"/>
        <dbReference type="ChEBI" id="CHEBI:58349"/>
        <dbReference type="ChEBI" id="CHEBI:456215"/>
    </reaction>
</comment>
<comment type="catalytic activity">
    <reaction evidence="4">
        <text>a medium-chain fatty acid + ATP + H(+) = a medium-chain fatty acyl-AMP + diphosphate</text>
        <dbReference type="Rhea" id="RHEA:56920"/>
        <dbReference type="ChEBI" id="CHEBI:15378"/>
        <dbReference type="ChEBI" id="CHEBI:30616"/>
        <dbReference type="ChEBI" id="CHEBI:33019"/>
        <dbReference type="ChEBI" id="CHEBI:59558"/>
        <dbReference type="ChEBI" id="CHEBI:141140"/>
    </reaction>
    <physiologicalReaction direction="left-to-right" evidence="4">
        <dbReference type="Rhea" id="RHEA:56921"/>
    </physiologicalReaction>
</comment>
<comment type="catalytic activity">
    <reaction evidence="4">
        <text>a long-chain fatty acid + ATP + H(+) = a long-chain fatty acyl-AMP + diphosphate</text>
        <dbReference type="Rhea" id="RHEA:52336"/>
        <dbReference type="ChEBI" id="CHEBI:15378"/>
        <dbReference type="ChEBI" id="CHEBI:30616"/>
        <dbReference type="ChEBI" id="CHEBI:33019"/>
        <dbReference type="ChEBI" id="CHEBI:57560"/>
        <dbReference type="ChEBI" id="CHEBI:136562"/>
    </reaction>
    <physiologicalReaction direction="left-to-right" evidence="4">
        <dbReference type="Rhea" id="RHEA:52337"/>
    </physiologicalReaction>
</comment>
<comment type="catalytic activity">
    <reaction evidence="4">
        <text>dodecanoate + ATP + H(+) = dodecanoyl-AMP + diphosphate</text>
        <dbReference type="Rhea" id="RHEA:43712"/>
        <dbReference type="ChEBI" id="CHEBI:15378"/>
        <dbReference type="ChEBI" id="CHEBI:18262"/>
        <dbReference type="ChEBI" id="CHEBI:30616"/>
        <dbReference type="ChEBI" id="CHEBI:33019"/>
        <dbReference type="ChEBI" id="CHEBI:83623"/>
    </reaction>
    <physiologicalReaction direction="left-to-right" evidence="4">
        <dbReference type="Rhea" id="RHEA:43713"/>
    </physiologicalReaction>
</comment>
<comment type="catalytic activity">
    <reaction evidence="4">
        <text>hexadecanoate + ATP + H(+) = hexadecanoyl-AMP + diphosphate</text>
        <dbReference type="Rhea" id="RHEA:43708"/>
        <dbReference type="ChEBI" id="CHEBI:7896"/>
        <dbReference type="ChEBI" id="CHEBI:15378"/>
        <dbReference type="ChEBI" id="CHEBI:30616"/>
        <dbReference type="ChEBI" id="CHEBI:33019"/>
        <dbReference type="ChEBI" id="CHEBI:83627"/>
    </reaction>
    <physiologicalReaction direction="left-to-right" evidence="4">
        <dbReference type="Rhea" id="RHEA:43709"/>
    </physiologicalReaction>
</comment>
<comment type="cofactor">
    <cofactor evidence="1 3">
        <name>pantetheine 4'-phosphate</name>
        <dbReference type="ChEBI" id="CHEBI:47942"/>
    </cofactor>
    <text evidence="1 3">Binds 1 phosphopantetheine covalently.</text>
</comment>
<comment type="domain">
    <text evidence="2 3">The N-terminal domain likely catalyzes substrate activation by formation of an initial acyl-AMP intermediate, the central region contains the phosphopantetheine attachment site, and the C-terminal domain catalyzes the reduction by NADPH of the intermediate thioester formed from the attack of the phosphopantetheine thiol at the carbonyl carbon of acyl-AMP.</text>
</comment>
<comment type="similarity">
    <text evidence="3 6">Belongs to the ATP-dependent AMP-binding enzyme family. Carboxylic acid reductase subfamily.</text>
</comment>
<reference key="1">
    <citation type="journal article" date="1998" name="Nature">
        <title>Deciphering the biology of Mycobacterium tuberculosis from the complete genome sequence.</title>
        <authorList>
            <person name="Cole S.T."/>
            <person name="Brosch R."/>
            <person name="Parkhill J."/>
            <person name="Garnier T."/>
            <person name="Churcher C.M."/>
            <person name="Harris D.E."/>
            <person name="Gordon S.V."/>
            <person name="Eiglmeier K."/>
            <person name="Gas S."/>
            <person name="Barry C.E. III"/>
            <person name="Tekaia F."/>
            <person name="Badcock K."/>
            <person name="Basham D."/>
            <person name="Brown D."/>
            <person name="Chillingworth T."/>
            <person name="Connor R."/>
            <person name="Davies R.M."/>
            <person name="Devlin K."/>
            <person name="Feltwell T."/>
            <person name="Gentles S."/>
            <person name="Hamlin N."/>
            <person name="Holroyd S."/>
            <person name="Hornsby T."/>
            <person name="Jagels K."/>
            <person name="Krogh A."/>
            <person name="McLean J."/>
            <person name="Moule S."/>
            <person name="Murphy L.D."/>
            <person name="Oliver S."/>
            <person name="Osborne J."/>
            <person name="Quail M.A."/>
            <person name="Rajandream M.A."/>
            <person name="Rogers J."/>
            <person name="Rutter S."/>
            <person name="Seeger K."/>
            <person name="Skelton S."/>
            <person name="Squares S."/>
            <person name="Squares R."/>
            <person name="Sulston J.E."/>
            <person name="Taylor K."/>
            <person name="Whitehead S."/>
            <person name="Barrell B.G."/>
        </authorList>
    </citation>
    <scope>NUCLEOTIDE SEQUENCE [LARGE SCALE GENOMIC DNA]</scope>
    <source>
        <strain>ATCC 25618 / H37Rv</strain>
    </source>
</reference>
<reference key="2">
    <citation type="journal article" date="2009" name="Nat. Chem. Biol.">
        <title>Mechanistic and functional insights into fatty acid activation in Mycobacterium tuberculosis.</title>
        <authorList>
            <person name="Arora P."/>
            <person name="Goyal A."/>
            <person name="Natarajan V.T."/>
            <person name="Rajakumara E."/>
            <person name="Verma P."/>
            <person name="Gupta R."/>
            <person name="Yousuf M."/>
            <person name="Trivedi O.A."/>
            <person name="Mohanty D."/>
            <person name="Tyagi A."/>
            <person name="Sankaranarayanan R."/>
            <person name="Gokhale R.S."/>
        </authorList>
    </citation>
    <scope>FUNCTION</scope>
    <scope>CATALYTIC ACTIVITY</scope>
</reference>
<reference key="3">
    <citation type="journal article" date="2011" name="Mol. Cell. Proteomics">
        <title>Proteogenomic analysis of Mycobacterium tuberculosis by high resolution mass spectrometry.</title>
        <authorList>
            <person name="Kelkar D.S."/>
            <person name="Kumar D."/>
            <person name="Kumar P."/>
            <person name="Balakrishnan L."/>
            <person name="Muthusamy B."/>
            <person name="Yadav A.K."/>
            <person name="Shrivastava P."/>
            <person name="Marimuthu A."/>
            <person name="Anand S."/>
            <person name="Sundaram H."/>
            <person name="Kingsbury R."/>
            <person name="Harsha H.C."/>
            <person name="Nair B."/>
            <person name="Prasad T.S."/>
            <person name="Chauhan D.S."/>
            <person name="Katoch K."/>
            <person name="Katoch V.M."/>
            <person name="Kumar P."/>
            <person name="Chaerkady R."/>
            <person name="Ramachandran S."/>
            <person name="Dash D."/>
            <person name="Pandey A."/>
        </authorList>
    </citation>
    <scope>IDENTIFICATION BY MASS SPECTROMETRY [LARGE SCALE ANALYSIS]</scope>
    <source>
        <strain>ATCC 25618 / H37Rv</strain>
    </source>
</reference>
<sequence>MSINDQRLTRRVEDLYASDAQFAAASPNEAITQAIDQPGVALPQLIRMVMEGYADRPALGQRALRFVTDPDSGRTMVELLPRFETITYRELWARAGTLATALSAEPAIRPGDRVCVLGFNSVDYTTIDIALIRLGAVSVPLQTSAPVTGLRPIVTETEPTMIATSIDNLGDAVEVLAGHAPARLVVFDYHGKVDTHREAVEAARARLAGSVTIDTLAELIERGRALPATPIADSADDALALLIYTSGSTGAPKGAMYRESQVMSFWRKSSGWFEPSGYPSITLNFMPMSHVGGRQVLYGTLSNGGTAYFVAKSDLSTLFEDLALVRPTELCFVPRIWDMVFAEFHSEVDRRLVDGADRAALEAQVKAELRENVLGGRFVMALTGSAPISAEMTAWVESLLADVHLVEGYGSTEAGMVLNDGMVRRPAVIDYKLVDVPELGYFGTDQPYPRGELLVKTQTMFPGYYQRPDVTAEVFDPDGFYRTGDIMAKVGPDQFVYLDRRNNVLKLSQGEFIAVSKLEAVFGDSPLVRQIFIYGNSARAYPLAVVVPSGDALSRHGIENLKPVISESLQEVARAAGLQSYEIPRDFIIETTPFTLENGLLTGIRKLARPQLKKFYGERLERLYTELADSQSNELRELRQSGPDAPVLPTLCRAAAALLGSTAADVRPDAHFADLGGDSLSALSLANLLHEIFGVDVPVGVIVSPASDLRALADHIEAARTGVRRPSFASIHGRSATEVHASDLTLDKFIDAATLAAAPNLPAPSAQVRTVLLTGATGFLGRYLALEWLDRMDLVNGKLICLVRARSDEEAQARLDATFDSGDPYLVRHYRELGAGRLEVLAGDKGEADLGLDRVTWQRLADTVDLIVDPAALVNHVLPYSQLFGPNAAGTAELLRLALTGKRKPYIYTSTIAVGEQIPPEAFTEDADIRAISPTRRIDDSYANGYANSKWAGEVLLREAHEQCGLPVTVFRCDMILADTSYTGQLNLPDMFTRLMLSLAATGIAPGSFYELDAHGNRQRAHYDGLPVEFVAEAICTLGTHSPDRFVTYHVMNPYDDGIGLDEFVDWLNSPTSGSGCTIQRIADYGEWLQRFETSLRALPDRQRHASLLPLLHNYREPAKPICGSIAPTDQFRAAVQEAKIGPDKDIPHLTAAIIAKYISNLRLLGLL</sequence>
<gene>
    <name evidence="3" type="primary">car</name>
    <name evidence="7" type="synonym">fadD9</name>
    <name evidence="7" type="ordered locus">Rv2590</name>
</gene>
<dbReference type="EC" id="1.2.1.-" evidence="1 3"/>
<dbReference type="EC" id="6.2.1.-" evidence="4"/>
<dbReference type="EMBL" id="AL123456">
    <property type="protein sequence ID" value="CCP45386.1"/>
    <property type="molecule type" value="Genomic_DNA"/>
</dbReference>
<dbReference type="RefSeq" id="NP_217106.1">
    <property type="nucleotide sequence ID" value="NC_000962.3"/>
</dbReference>
<dbReference type="RefSeq" id="WP_003413409.1">
    <property type="nucleotide sequence ID" value="NZ_NVQJ01000023.1"/>
</dbReference>
<dbReference type="SMR" id="Q50631"/>
<dbReference type="STRING" id="83332.Rv2590"/>
<dbReference type="SwissLipids" id="SLP:000000983"/>
<dbReference type="PaxDb" id="83332-Rv2590"/>
<dbReference type="DNASU" id="888574"/>
<dbReference type="GeneID" id="888574"/>
<dbReference type="KEGG" id="mtu:Rv2590"/>
<dbReference type="KEGG" id="mtv:RVBD_2590"/>
<dbReference type="PATRIC" id="fig|83332.111.peg.2893"/>
<dbReference type="TubercuList" id="Rv2590"/>
<dbReference type="eggNOG" id="COG1022">
    <property type="taxonomic scope" value="Bacteria"/>
</dbReference>
<dbReference type="eggNOG" id="COG3320">
    <property type="taxonomic scope" value="Bacteria"/>
</dbReference>
<dbReference type="InParanoid" id="Q50631"/>
<dbReference type="OrthoDB" id="2472181at2"/>
<dbReference type="PhylomeDB" id="Q50631"/>
<dbReference type="Proteomes" id="UP000001584">
    <property type="component" value="Chromosome"/>
</dbReference>
<dbReference type="GO" id="GO:0005829">
    <property type="term" value="C:cytosol"/>
    <property type="evidence" value="ECO:0007005"/>
    <property type="project" value="MTBBASE"/>
</dbReference>
<dbReference type="GO" id="GO:0016020">
    <property type="term" value="C:membrane"/>
    <property type="evidence" value="ECO:0000318"/>
    <property type="project" value="GO_Central"/>
</dbReference>
<dbReference type="GO" id="GO:0005886">
    <property type="term" value="C:plasma membrane"/>
    <property type="evidence" value="ECO:0007005"/>
    <property type="project" value="MTBBASE"/>
</dbReference>
<dbReference type="GO" id="GO:0005524">
    <property type="term" value="F:ATP binding"/>
    <property type="evidence" value="ECO:0007669"/>
    <property type="project" value="UniProtKB-UniRule"/>
</dbReference>
<dbReference type="GO" id="GO:0004467">
    <property type="term" value="F:long-chain fatty acid-CoA ligase activity"/>
    <property type="evidence" value="ECO:0000318"/>
    <property type="project" value="GO_Central"/>
</dbReference>
<dbReference type="GO" id="GO:0050661">
    <property type="term" value="F:NADP binding"/>
    <property type="evidence" value="ECO:0007669"/>
    <property type="project" value="UniProtKB-UniRule"/>
</dbReference>
<dbReference type="GO" id="GO:0016620">
    <property type="term" value="F:oxidoreductase activity, acting on the aldehyde or oxo group of donors, NAD or NADP as acceptor"/>
    <property type="evidence" value="ECO:0007669"/>
    <property type="project" value="UniProtKB-UniRule"/>
</dbReference>
<dbReference type="GO" id="GO:0031177">
    <property type="term" value="F:phosphopantetheine binding"/>
    <property type="evidence" value="ECO:0007669"/>
    <property type="project" value="UniProtKB-UniRule"/>
</dbReference>
<dbReference type="GO" id="GO:0009058">
    <property type="term" value="P:biosynthetic process"/>
    <property type="evidence" value="ECO:0007669"/>
    <property type="project" value="UniProtKB-ARBA"/>
</dbReference>
<dbReference type="CDD" id="cd17632">
    <property type="entry name" value="AFD_CAR-like"/>
    <property type="match status" value="1"/>
</dbReference>
<dbReference type="CDD" id="cd05235">
    <property type="entry name" value="SDR_e1"/>
    <property type="match status" value="1"/>
</dbReference>
<dbReference type="Gene3D" id="1.10.1200.10">
    <property type="entry name" value="ACP-like"/>
    <property type="match status" value="1"/>
</dbReference>
<dbReference type="Gene3D" id="3.40.50.12780">
    <property type="entry name" value="N-terminal domain of ligase-like"/>
    <property type="match status" value="1"/>
</dbReference>
<dbReference type="Gene3D" id="3.40.50.720">
    <property type="entry name" value="NAD(P)-binding Rossmann-like Domain"/>
    <property type="match status" value="1"/>
</dbReference>
<dbReference type="HAMAP" id="MF_02247">
    <property type="entry name" value="Carbox_acid_reduct"/>
    <property type="match status" value="1"/>
</dbReference>
<dbReference type="InterPro" id="IPR036736">
    <property type="entry name" value="ACP-like_sf"/>
</dbReference>
<dbReference type="InterPro" id="IPR020845">
    <property type="entry name" value="AMP-binding_CS"/>
</dbReference>
<dbReference type="InterPro" id="IPR000873">
    <property type="entry name" value="AMP-dep_synth/lig_dom"/>
</dbReference>
<dbReference type="InterPro" id="IPR042099">
    <property type="entry name" value="ANL_N_sf"/>
</dbReference>
<dbReference type="InterPro" id="IPR046407">
    <property type="entry name" value="CAR"/>
</dbReference>
<dbReference type="InterPro" id="IPR013120">
    <property type="entry name" value="Far_NAD-bd"/>
</dbReference>
<dbReference type="InterPro" id="IPR036291">
    <property type="entry name" value="NAD(P)-bd_dom_sf"/>
</dbReference>
<dbReference type="InterPro" id="IPR020806">
    <property type="entry name" value="PKS_PP-bd"/>
</dbReference>
<dbReference type="InterPro" id="IPR009081">
    <property type="entry name" value="PP-bd_ACP"/>
</dbReference>
<dbReference type="InterPro" id="IPR010080">
    <property type="entry name" value="Thioester_reductase-like_dom"/>
</dbReference>
<dbReference type="NCBIfam" id="NF041592">
    <property type="entry name" value="carboxyl_red"/>
    <property type="match status" value="1"/>
</dbReference>
<dbReference type="NCBIfam" id="TIGR01746">
    <property type="entry name" value="Thioester-redct"/>
    <property type="match status" value="1"/>
</dbReference>
<dbReference type="PANTHER" id="PTHR43272:SF33">
    <property type="entry name" value="AMP-BINDING DOMAIN-CONTAINING PROTEIN-RELATED"/>
    <property type="match status" value="1"/>
</dbReference>
<dbReference type="PANTHER" id="PTHR43272">
    <property type="entry name" value="LONG-CHAIN-FATTY-ACID--COA LIGASE"/>
    <property type="match status" value="1"/>
</dbReference>
<dbReference type="Pfam" id="PF00501">
    <property type="entry name" value="AMP-binding"/>
    <property type="match status" value="1"/>
</dbReference>
<dbReference type="Pfam" id="PF07993">
    <property type="entry name" value="NAD_binding_4"/>
    <property type="match status" value="1"/>
</dbReference>
<dbReference type="Pfam" id="PF00550">
    <property type="entry name" value="PP-binding"/>
    <property type="match status" value="1"/>
</dbReference>
<dbReference type="SMART" id="SM00823">
    <property type="entry name" value="PKS_PP"/>
    <property type="match status" value="1"/>
</dbReference>
<dbReference type="SMART" id="SM01294">
    <property type="entry name" value="PKS_PP_betabranch"/>
    <property type="match status" value="1"/>
</dbReference>
<dbReference type="SUPFAM" id="SSF56801">
    <property type="entry name" value="Acetyl-CoA synthetase-like"/>
    <property type="match status" value="1"/>
</dbReference>
<dbReference type="SUPFAM" id="SSF47336">
    <property type="entry name" value="ACP-like"/>
    <property type="match status" value="1"/>
</dbReference>
<dbReference type="SUPFAM" id="SSF51735">
    <property type="entry name" value="NAD(P)-binding Rossmann-fold domains"/>
    <property type="match status" value="1"/>
</dbReference>
<dbReference type="PROSITE" id="PS00455">
    <property type="entry name" value="AMP_BINDING"/>
    <property type="match status" value="1"/>
</dbReference>
<dbReference type="PROSITE" id="PS50075">
    <property type="entry name" value="CARRIER"/>
    <property type="match status" value="1"/>
</dbReference>
<accession>Q50631</accession>
<accession>F2GGJ8</accession>
<accession>I6YDT5</accession>